<gene>
    <name type="primary">LPAL2</name>
    <name type="synonym">APOARGC</name>
</gene>
<evidence type="ECO:0000255" key="1"/>
<evidence type="ECO:0000255" key="2">
    <source>
        <dbReference type="PROSITE-ProRule" id="PRU00121"/>
    </source>
</evidence>
<evidence type="ECO:0000269" key="3">
    <source>
    </source>
</evidence>
<evidence type="ECO:0000305" key="4"/>
<name>LPAL2_HUMAN</name>
<organism>
    <name type="scientific">Homo sapiens</name>
    <name type="common">Human</name>
    <dbReference type="NCBI Taxonomy" id="9606"/>
    <lineage>
        <taxon>Eukaryota</taxon>
        <taxon>Metazoa</taxon>
        <taxon>Chordata</taxon>
        <taxon>Craniata</taxon>
        <taxon>Vertebrata</taxon>
        <taxon>Euteleostomi</taxon>
        <taxon>Mammalia</taxon>
        <taxon>Eutheria</taxon>
        <taxon>Euarchontoglires</taxon>
        <taxon>Primates</taxon>
        <taxon>Haplorrhini</taxon>
        <taxon>Catarrhini</taxon>
        <taxon>Hominidae</taxon>
        <taxon>Homo</taxon>
    </lineage>
</organism>
<comment type="interaction">
    <interactant intactId="EBI-10238012">
        <id>Q16609</id>
    </interactant>
    <interactant intactId="EBI-718729">
        <id>P55212</id>
        <label>CASP6</label>
    </interactant>
    <organismsDiffer>false</organismsDiffer>
    <experiments>3</experiments>
</comment>
<comment type="interaction">
    <interactant intactId="EBI-10238012">
        <id>Q16609</id>
    </interactant>
    <interactant intactId="EBI-6624398">
        <id>P06307</id>
        <label>CCK</label>
    </interactant>
    <organismsDiffer>false</organismsDiffer>
    <experiments>3</experiments>
</comment>
<comment type="interaction">
    <interactant intactId="EBI-10238012">
        <id>Q16609</id>
    </interactant>
    <interactant intactId="EBI-16041593">
        <id>O94985-2</id>
        <label>CLSTN1</label>
    </interactant>
    <organismsDiffer>false</organismsDiffer>
    <experiments>3</experiments>
</comment>
<comment type="interaction">
    <interactant intactId="EBI-10238012">
        <id>Q16609</id>
    </interactant>
    <interactant intactId="EBI-473886">
        <id>O00291</id>
        <label>HIP1</label>
    </interactant>
    <organismsDiffer>false</organismsDiffer>
    <experiments>3</experiments>
</comment>
<comment type="interaction">
    <interactant intactId="EBI-10238012">
        <id>Q16609</id>
    </interactant>
    <interactant intactId="EBI-286642">
        <id>P62826</id>
        <label>RAN</label>
    </interactant>
    <organismsDiffer>false</organismsDiffer>
    <experiments>3</experiments>
</comment>
<comment type="interaction">
    <interactant intactId="EBI-10238012">
        <id>Q16609</id>
    </interactant>
    <interactant intactId="EBI-2107455">
        <id>Q08AM6</id>
        <label>VAC14</label>
    </interactant>
    <organismsDiffer>false</organismsDiffer>
    <experiments>3</experiments>
</comment>
<comment type="subcellular location">
    <subcellularLocation>
        <location evidence="4">Secreted</location>
    </subcellularLocation>
</comment>
<comment type="tissue specificity">
    <text evidence="3">Expressed in liver but not in other tissues tested.</text>
</comment>
<comment type="domain">
    <text>The signal sequence and the kringle domain are highly similar to the apolipoprotein(a) precursor protein. This protein is however much shorter and does not contain any peptidase region.</text>
</comment>
<comment type="caution">
    <text evidence="4">Could be the product of a pseudogene.</text>
</comment>
<reference key="1">
    <citation type="journal article" date="1995" name="Arterioscler. Thromb. Vasc. Biol.">
        <title>Loss of a splice donor site at a 'skipped exon' in a gene homologous to apolipoprotein(a) leads to an mRNA encoding a protein consisting of a single kringle domain.</title>
        <authorList>
            <person name="Byrne C.D."/>
            <person name="Schwartz K."/>
            <person name="Lawn R.M."/>
        </authorList>
    </citation>
    <scope>NUCLEOTIDE SEQUENCE [MRNA]</scope>
    <scope>TISSUE SPECIFICITY</scope>
    <source>
        <tissue>Liver</tissue>
    </source>
</reference>
<reference key="2">
    <citation type="submission" date="2005-09" db="EMBL/GenBank/DDBJ databases">
        <authorList>
            <person name="Mural R.J."/>
            <person name="Istrail S."/>
            <person name="Sutton G.G."/>
            <person name="Florea L."/>
            <person name="Halpern A.L."/>
            <person name="Mobarry C.M."/>
            <person name="Lippert R."/>
            <person name="Walenz B."/>
            <person name="Shatkay H."/>
            <person name="Dew I."/>
            <person name="Miller J.R."/>
            <person name="Flanigan M.J."/>
            <person name="Edwards N.J."/>
            <person name="Bolanos R."/>
            <person name="Fasulo D."/>
            <person name="Halldorsson B.V."/>
            <person name="Hannenhalli S."/>
            <person name="Turner R."/>
            <person name="Yooseph S."/>
            <person name="Lu F."/>
            <person name="Nusskern D.R."/>
            <person name="Shue B.C."/>
            <person name="Zheng X.H."/>
            <person name="Zhong F."/>
            <person name="Delcher A.L."/>
            <person name="Huson D.H."/>
            <person name="Kravitz S.A."/>
            <person name="Mouchard L."/>
            <person name="Reinert K."/>
            <person name="Remington K.A."/>
            <person name="Clark A.G."/>
            <person name="Waterman M.S."/>
            <person name="Eichler E.E."/>
            <person name="Adams M.D."/>
            <person name="Hunkapiller M.W."/>
            <person name="Myers E.W."/>
            <person name="Venter J.C."/>
        </authorList>
    </citation>
    <scope>NUCLEOTIDE SEQUENCE [LARGE SCALE GENOMIC DNA]</scope>
</reference>
<reference key="3">
    <citation type="journal article" date="1994" name="Arterioscler. Thromb.">
        <title>The human apolipoprotein(a)/plasminogen gene cluster contains a novel homologue transcribed in liver.</title>
        <authorList>
            <person name="Byrne C.D."/>
            <person name="Schwartz K."/>
            <person name="Meer K."/>
            <person name="Cheng J.F."/>
            <person name="Lawn R.M."/>
        </authorList>
    </citation>
    <scope>IDENTIFICATION</scope>
</reference>
<sequence length="132" mass="14886">MEHKEVVLLLLLFLKSAPTETGPSVQECYHSNGQSYRGTYFTTVTGRTCQAWSSMTPHQHSRTPEKYPNDGLISNYCRNPDCSAGPWCYTTDPNVRWEYCNLTRCSDDEGTVFVPLTVIPVPSLEDSFIQVA</sequence>
<protein>
    <recommendedName>
        <fullName>Putative apolipoprotein(a)-like protein 2</fullName>
        <shortName>Apo(a)-like protein 2</shortName>
        <shortName>Lp(a)-liker protein 2</shortName>
    </recommendedName>
    <alternativeName>
        <fullName>Apolipoprotein a-related gene C protein</fullName>
        <shortName>Apo(a)rg-C</shortName>
    </alternativeName>
</protein>
<feature type="signal peptide" evidence="1">
    <location>
        <begin position="1"/>
        <end position="21"/>
    </location>
</feature>
<feature type="chain" id="PRO_0000317566" description="Putative apolipoprotein(a)-like protein 2">
    <location>
        <begin position="22"/>
        <end position="132"/>
    </location>
</feature>
<feature type="domain" description="Kringle" evidence="2">
    <location>
        <begin position="27"/>
        <end position="105"/>
    </location>
</feature>
<feature type="glycosylation site" description="N-linked (GlcNAc...) asparagine" evidence="1">
    <location>
        <position position="101"/>
    </location>
</feature>
<feature type="disulfide bond" evidence="2">
    <location>
        <begin position="28"/>
        <end position="105"/>
    </location>
</feature>
<feature type="disulfide bond" evidence="2">
    <location>
        <begin position="49"/>
        <end position="88"/>
    </location>
</feature>
<feature type="disulfide bond" evidence="2">
    <location>
        <begin position="77"/>
        <end position="100"/>
    </location>
</feature>
<feature type="sequence variant" id="VAR_051100" description="In dbSNP:rs7749199.">
    <original>T</original>
    <variation>M</variation>
    <location>
        <position position="91"/>
    </location>
</feature>
<dbReference type="EMBL" id="U19517">
    <property type="protein sequence ID" value="AAA85692.1"/>
    <property type="molecule type" value="mRNA"/>
</dbReference>
<dbReference type="EMBL" id="U19518">
    <property type="protein sequence ID" value="AAA85693.1"/>
    <property type="molecule type" value="mRNA"/>
</dbReference>
<dbReference type="EMBL" id="CH471051">
    <property type="protein sequence ID" value="EAW47597.1"/>
    <property type="molecule type" value="Genomic_DNA"/>
</dbReference>
<dbReference type="EMBL" id="CH471051">
    <property type="protein sequence ID" value="EAW47598.1"/>
    <property type="molecule type" value="Genomic_DNA"/>
</dbReference>
<dbReference type="SMR" id="Q16609"/>
<dbReference type="IntAct" id="Q16609">
    <property type="interactions" value="6"/>
</dbReference>
<dbReference type="GlyCosmos" id="Q16609">
    <property type="glycosylation" value="1 site, No reported glycans"/>
</dbReference>
<dbReference type="GlyGen" id="Q16609">
    <property type="glycosylation" value="1 site"/>
</dbReference>
<dbReference type="BioMuta" id="HGNC:21210"/>
<dbReference type="DMDM" id="74739884"/>
<dbReference type="jPOST" id="Q16609"/>
<dbReference type="MassIVE" id="Q16609"/>
<dbReference type="ProteomicsDB" id="60943"/>
<dbReference type="AGR" id="HGNC:21210"/>
<dbReference type="GeneCards" id="LPAL2"/>
<dbReference type="HGNC" id="HGNC:21210">
    <property type="gene designation" value="LPAL2"/>
</dbReference>
<dbReference type="MIM" id="611682">
    <property type="type" value="gene"/>
</dbReference>
<dbReference type="neXtProt" id="NX_Q16609"/>
<dbReference type="InParanoid" id="Q16609"/>
<dbReference type="PAN-GO" id="Q16609">
    <property type="GO annotations" value="5 GO annotations based on evolutionary models"/>
</dbReference>
<dbReference type="PhylomeDB" id="Q16609"/>
<dbReference type="PathwayCommons" id="Q16609"/>
<dbReference type="SignaLink" id="Q16609"/>
<dbReference type="Pharos" id="Q16609">
    <property type="development level" value="Tdark"/>
</dbReference>
<dbReference type="PRO" id="PR:Q16609"/>
<dbReference type="Proteomes" id="UP000005640">
    <property type="component" value="Unplaced"/>
</dbReference>
<dbReference type="RNAct" id="Q16609">
    <property type="molecule type" value="protein"/>
</dbReference>
<dbReference type="GO" id="GO:0005576">
    <property type="term" value="C:extracellular region"/>
    <property type="evidence" value="ECO:0007669"/>
    <property type="project" value="UniProtKB-SubCell"/>
</dbReference>
<dbReference type="CDD" id="cd00108">
    <property type="entry name" value="KR"/>
    <property type="match status" value="1"/>
</dbReference>
<dbReference type="FunFam" id="2.40.20.10:FF:000005">
    <property type="entry name" value="Plasminogen"/>
    <property type="match status" value="1"/>
</dbReference>
<dbReference type="Gene3D" id="2.40.20.10">
    <property type="entry name" value="Plasminogen Kringle 4"/>
    <property type="match status" value="1"/>
</dbReference>
<dbReference type="InterPro" id="IPR000001">
    <property type="entry name" value="Kringle"/>
</dbReference>
<dbReference type="InterPro" id="IPR013806">
    <property type="entry name" value="Kringle-like"/>
</dbReference>
<dbReference type="InterPro" id="IPR018056">
    <property type="entry name" value="Kringle_CS"/>
</dbReference>
<dbReference type="InterPro" id="IPR038178">
    <property type="entry name" value="Kringle_sf"/>
</dbReference>
<dbReference type="InterPro" id="IPR050759">
    <property type="entry name" value="Serine_protease_kringle"/>
</dbReference>
<dbReference type="PANTHER" id="PTHR24261:SF2">
    <property type="entry name" value="LIPOPROTEIN(A)"/>
    <property type="match status" value="1"/>
</dbReference>
<dbReference type="PANTHER" id="PTHR24261">
    <property type="entry name" value="PLASMINOGEN-RELATED"/>
    <property type="match status" value="1"/>
</dbReference>
<dbReference type="Pfam" id="PF00051">
    <property type="entry name" value="Kringle"/>
    <property type="match status" value="1"/>
</dbReference>
<dbReference type="PRINTS" id="PR00018">
    <property type="entry name" value="KRINGLE"/>
</dbReference>
<dbReference type="SMART" id="SM00130">
    <property type="entry name" value="KR"/>
    <property type="match status" value="1"/>
</dbReference>
<dbReference type="SUPFAM" id="SSF57440">
    <property type="entry name" value="Kringle-like"/>
    <property type="match status" value="1"/>
</dbReference>
<dbReference type="PROSITE" id="PS00021">
    <property type="entry name" value="KRINGLE_1"/>
    <property type="match status" value="1"/>
</dbReference>
<dbReference type="PROSITE" id="PS50070">
    <property type="entry name" value="KRINGLE_2"/>
    <property type="match status" value="1"/>
</dbReference>
<proteinExistence type="uncertain"/>
<keyword id="KW-1015">Disulfide bond</keyword>
<keyword id="KW-0325">Glycoprotein</keyword>
<keyword id="KW-0420">Kringle</keyword>
<keyword id="KW-1267">Proteomics identification</keyword>
<keyword id="KW-1185">Reference proteome</keyword>
<keyword id="KW-0964">Secreted</keyword>
<keyword id="KW-0732">Signal</keyword>
<accession>Q16609</accession>
<accession>E1P5B4</accession>